<sequence>MINLLNITYPEFESLIVTTLQEKTYRAMQIWQWVWQKQITDIESMTNLPQKIRASLTALIKINLPEIVTIQQSSDGTKKFLLRLSDGALIETVLIPSIDKAGNIRITQCLSSQVGCSMGCTFCSTATMGFIRNLTAGEIVSQVLLAKLHLNDNKPDKPIIRNIVFMGMGEPLLNLTELTRALHILHSEKGLNFSARRITVSTCGIKKGIQALSENGLAFLALSLHASNQELRSTIMPKAAKWDLKELIDTLKNYSLKKREKITFEYLLLGGINDSPEHAKELAKLITDIKGKLNLIPYNPAQGQPYLKPTEENILKFQKVLWSKGIVTILRKSKGQDINAACGQLKTTYLSQSSSTIY</sequence>
<organism>
    <name type="scientific">Lawsonia intracellularis (strain PHE/MN1-00)</name>
    <dbReference type="NCBI Taxonomy" id="363253"/>
    <lineage>
        <taxon>Bacteria</taxon>
        <taxon>Pseudomonadati</taxon>
        <taxon>Thermodesulfobacteriota</taxon>
        <taxon>Desulfovibrionia</taxon>
        <taxon>Desulfovibrionales</taxon>
        <taxon>Desulfovibrionaceae</taxon>
        <taxon>Lawsonia</taxon>
    </lineage>
</organism>
<feature type="chain" id="PRO_0000350225" description="Dual-specificity RNA methyltransferase RlmN">
    <location>
        <begin position="1"/>
        <end position="358"/>
    </location>
</feature>
<feature type="domain" description="Radical SAM core" evidence="2">
    <location>
        <begin position="102"/>
        <end position="337"/>
    </location>
</feature>
<feature type="active site" description="Proton acceptor" evidence="1">
    <location>
        <position position="91"/>
    </location>
</feature>
<feature type="active site" description="S-methylcysteine intermediate" evidence="1">
    <location>
        <position position="342"/>
    </location>
</feature>
<feature type="binding site" evidence="1">
    <location>
        <position position="116"/>
    </location>
    <ligand>
        <name>[4Fe-4S] cluster</name>
        <dbReference type="ChEBI" id="CHEBI:49883"/>
        <note>4Fe-4S-S-AdoMet</note>
    </ligand>
</feature>
<feature type="binding site" evidence="1">
    <location>
        <position position="120"/>
    </location>
    <ligand>
        <name>[4Fe-4S] cluster</name>
        <dbReference type="ChEBI" id="CHEBI:49883"/>
        <note>4Fe-4S-S-AdoMet</note>
    </ligand>
</feature>
<feature type="binding site" evidence="1">
    <location>
        <position position="123"/>
    </location>
    <ligand>
        <name>[4Fe-4S] cluster</name>
        <dbReference type="ChEBI" id="CHEBI:49883"/>
        <note>4Fe-4S-S-AdoMet</note>
    </ligand>
</feature>
<feature type="binding site" evidence="1">
    <location>
        <begin position="169"/>
        <end position="170"/>
    </location>
    <ligand>
        <name>S-adenosyl-L-methionine</name>
        <dbReference type="ChEBI" id="CHEBI:59789"/>
    </ligand>
</feature>
<feature type="binding site" evidence="1">
    <location>
        <position position="201"/>
    </location>
    <ligand>
        <name>S-adenosyl-L-methionine</name>
        <dbReference type="ChEBI" id="CHEBI:59789"/>
    </ligand>
</feature>
<feature type="binding site" evidence="1">
    <location>
        <begin position="223"/>
        <end position="225"/>
    </location>
    <ligand>
        <name>S-adenosyl-L-methionine</name>
        <dbReference type="ChEBI" id="CHEBI:59789"/>
    </ligand>
</feature>
<feature type="binding site" evidence="1">
    <location>
        <position position="299"/>
    </location>
    <ligand>
        <name>S-adenosyl-L-methionine</name>
        <dbReference type="ChEBI" id="CHEBI:59789"/>
    </ligand>
</feature>
<feature type="disulfide bond" description="(transient)" evidence="1">
    <location>
        <begin position="109"/>
        <end position="342"/>
    </location>
</feature>
<evidence type="ECO:0000255" key="1">
    <source>
        <dbReference type="HAMAP-Rule" id="MF_01849"/>
    </source>
</evidence>
<evidence type="ECO:0000255" key="2">
    <source>
        <dbReference type="PROSITE-ProRule" id="PRU01266"/>
    </source>
</evidence>
<name>RLMN_LAWIP</name>
<protein>
    <recommendedName>
        <fullName evidence="1">Dual-specificity RNA methyltransferase RlmN</fullName>
        <ecNumber evidence="1">2.1.1.192</ecNumber>
    </recommendedName>
    <alternativeName>
        <fullName evidence="1">23S rRNA (adenine(2503)-C(2))-methyltransferase</fullName>
    </alternativeName>
    <alternativeName>
        <fullName evidence="1">23S rRNA m2A2503 methyltransferase</fullName>
    </alternativeName>
    <alternativeName>
        <fullName evidence="1">Ribosomal RNA large subunit methyltransferase N</fullName>
    </alternativeName>
    <alternativeName>
        <fullName evidence="1">tRNA (adenine(37)-C(2))-methyltransferase</fullName>
    </alternativeName>
    <alternativeName>
        <fullName evidence="1">tRNA m2A37 methyltransferase</fullName>
    </alternativeName>
</protein>
<keyword id="KW-0004">4Fe-4S</keyword>
<keyword id="KW-0963">Cytoplasm</keyword>
<keyword id="KW-1015">Disulfide bond</keyword>
<keyword id="KW-0408">Iron</keyword>
<keyword id="KW-0411">Iron-sulfur</keyword>
<keyword id="KW-0479">Metal-binding</keyword>
<keyword id="KW-0489">Methyltransferase</keyword>
<keyword id="KW-1185">Reference proteome</keyword>
<keyword id="KW-0698">rRNA processing</keyword>
<keyword id="KW-0949">S-adenosyl-L-methionine</keyword>
<keyword id="KW-0808">Transferase</keyword>
<keyword id="KW-0819">tRNA processing</keyword>
<accession>Q1MQJ3</accession>
<proteinExistence type="inferred from homology"/>
<comment type="function">
    <text evidence="1">Specifically methylates position 2 of adenine 2503 in 23S rRNA and position 2 of adenine 37 in tRNAs. m2A2503 modification seems to play a crucial role in the proofreading step occurring at the peptidyl transferase center and thus would serve to optimize ribosomal fidelity.</text>
</comment>
<comment type="catalytic activity">
    <reaction evidence="1">
        <text>adenosine(2503) in 23S rRNA + 2 reduced [2Fe-2S]-[ferredoxin] + 2 S-adenosyl-L-methionine = 2-methyladenosine(2503) in 23S rRNA + 5'-deoxyadenosine + L-methionine + 2 oxidized [2Fe-2S]-[ferredoxin] + S-adenosyl-L-homocysteine</text>
        <dbReference type="Rhea" id="RHEA:42916"/>
        <dbReference type="Rhea" id="RHEA-COMP:10000"/>
        <dbReference type="Rhea" id="RHEA-COMP:10001"/>
        <dbReference type="Rhea" id="RHEA-COMP:10152"/>
        <dbReference type="Rhea" id="RHEA-COMP:10282"/>
        <dbReference type="ChEBI" id="CHEBI:17319"/>
        <dbReference type="ChEBI" id="CHEBI:33737"/>
        <dbReference type="ChEBI" id="CHEBI:33738"/>
        <dbReference type="ChEBI" id="CHEBI:57844"/>
        <dbReference type="ChEBI" id="CHEBI:57856"/>
        <dbReference type="ChEBI" id="CHEBI:59789"/>
        <dbReference type="ChEBI" id="CHEBI:74411"/>
        <dbReference type="ChEBI" id="CHEBI:74497"/>
        <dbReference type="EC" id="2.1.1.192"/>
    </reaction>
</comment>
<comment type="catalytic activity">
    <reaction evidence="1">
        <text>adenosine(37) in tRNA + 2 reduced [2Fe-2S]-[ferredoxin] + 2 S-adenosyl-L-methionine = 2-methyladenosine(37) in tRNA + 5'-deoxyadenosine + L-methionine + 2 oxidized [2Fe-2S]-[ferredoxin] + S-adenosyl-L-homocysteine</text>
        <dbReference type="Rhea" id="RHEA:43332"/>
        <dbReference type="Rhea" id="RHEA-COMP:10000"/>
        <dbReference type="Rhea" id="RHEA-COMP:10001"/>
        <dbReference type="Rhea" id="RHEA-COMP:10162"/>
        <dbReference type="Rhea" id="RHEA-COMP:10485"/>
        <dbReference type="ChEBI" id="CHEBI:17319"/>
        <dbReference type="ChEBI" id="CHEBI:33737"/>
        <dbReference type="ChEBI" id="CHEBI:33738"/>
        <dbReference type="ChEBI" id="CHEBI:57844"/>
        <dbReference type="ChEBI" id="CHEBI:57856"/>
        <dbReference type="ChEBI" id="CHEBI:59789"/>
        <dbReference type="ChEBI" id="CHEBI:74411"/>
        <dbReference type="ChEBI" id="CHEBI:74497"/>
        <dbReference type="EC" id="2.1.1.192"/>
    </reaction>
</comment>
<comment type="cofactor">
    <cofactor evidence="1">
        <name>[4Fe-4S] cluster</name>
        <dbReference type="ChEBI" id="CHEBI:49883"/>
    </cofactor>
    <text evidence="1">Binds 1 [4Fe-4S] cluster. The cluster is coordinated with 3 cysteines and an exchangeable S-adenosyl-L-methionine.</text>
</comment>
<comment type="subcellular location">
    <subcellularLocation>
        <location evidence="1">Cytoplasm</location>
    </subcellularLocation>
</comment>
<comment type="miscellaneous">
    <text evidence="1">Reaction proceeds by a ping-pong mechanism involving intermediate methylation of a conserved cysteine residue.</text>
</comment>
<comment type="similarity">
    <text evidence="1">Belongs to the radical SAM superfamily. RlmN family.</text>
</comment>
<gene>
    <name evidence="1" type="primary">rlmN</name>
    <name type="ordered locus">LI0680</name>
</gene>
<dbReference type="EC" id="2.1.1.192" evidence="1"/>
<dbReference type="EMBL" id="AM180252">
    <property type="protein sequence ID" value="CAJ54734.1"/>
    <property type="molecule type" value="Genomic_DNA"/>
</dbReference>
<dbReference type="RefSeq" id="WP_011526763.1">
    <property type="nucleotide sequence ID" value="NC_008011.1"/>
</dbReference>
<dbReference type="SMR" id="Q1MQJ3"/>
<dbReference type="STRING" id="363253.LI0680"/>
<dbReference type="KEGG" id="lip:LI0680"/>
<dbReference type="eggNOG" id="COG0820">
    <property type="taxonomic scope" value="Bacteria"/>
</dbReference>
<dbReference type="HOGENOM" id="CLU_029101_0_0_7"/>
<dbReference type="OrthoDB" id="9793973at2"/>
<dbReference type="Proteomes" id="UP000002430">
    <property type="component" value="Chromosome"/>
</dbReference>
<dbReference type="GO" id="GO:0005737">
    <property type="term" value="C:cytoplasm"/>
    <property type="evidence" value="ECO:0007669"/>
    <property type="project" value="UniProtKB-SubCell"/>
</dbReference>
<dbReference type="GO" id="GO:0051539">
    <property type="term" value="F:4 iron, 4 sulfur cluster binding"/>
    <property type="evidence" value="ECO:0007669"/>
    <property type="project" value="UniProtKB-UniRule"/>
</dbReference>
<dbReference type="GO" id="GO:0046872">
    <property type="term" value="F:metal ion binding"/>
    <property type="evidence" value="ECO:0007669"/>
    <property type="project" value="UniProtKB-KW"/>
</dbReference>
<dbReference type="GO" id="GO:0070040">
    <property type="term" value="F:rRNA (adenine(2503)-C2-)-methyltransferase activity"/>
    <property type="evidence" value="ECO:0007669"/>
    <property type="project" value="UniProtKB-UniRule"/>
</dbReference>
<dbReference type="GO" id="GO:0019843">
    <property type="term" value="F:rRNA binding"/>
    <property type="evidence" value="ECO:0007669"/>
    <property type="project" value="UniProtKB-UniRule"/>
</dbReference>
<dbReference type="GO" id="GO:0002935">
    <property type="term" value="F:tRNA (adenine(37)-C2)-methyltransferase activity"/>
    <property type="evidence" value="ECO:0007669"/>
    <property type="project" value="UniProtKB-UniRule"/>
</dbReference>
<dbReference type="GO" id="GO:0000049">
    <property type="term" value="F:tRNA binding"/>
    <property type="evidence" value="ECO:0007669"/>
    <property type="project" value="UniProtKB-UniRule"/>
</dbReference>
<dbReference type="GO" id="GO:0070475">
    <property type="term" value="P:rRNA base methylation"/>
    <property type="evidence" value="ECO:0007669"/>
    <property type="project" value="UniProtKB-UniRule"/>
</dbReference>
<dbReference type="GO" id="GO:0030488">
    <property type="term" value="P:tRNA methylation"/>
    <property type="evidence" value="ECO:0007669"/>
    <property type="project" value="UniProtKB-UniRule"/>
</dbReference>
<dbReference type="CDD" id="cd01335">
    <property type="entry name" value="Radical_SAM"/>
    <property type="match status" value="1"/>
</dbReference>
<dbReference type="FunFam" id="3.20.20.70:FF:000014">
    <property type="entry name" value="Probable dual-specificity RNA methyltransferase RlmN"/>
    <property type="match status" value="1"/>
</dbReference>
<dbReference type="Gene3D" id="1.10.150.530">
    <property type="match status" value="1"/>
</dbReference>
<dbReference type="Gene3D" id="3.20.20.70">
    <property type="entry name" value="Aldolase class I"/>
    <property type="match status" value="1"/>
</dbReference>
<dbReference type="HAMAP" id="MF_01849">
    <property type="entry name" value="RNA_methyltr_RlmN"/>
    <property type="match status" value="1"/>
</dbReference>
<dbReference type="InterPro" id="IPR013785">
    <property type="entry name" value="Aldolase_TIM"/>
</dbReference>
<dbReference type="InterPro" id="IPR040072">
    <property type="entry name" value="Methyltransferase_A"/>
</dbReference>
<dbReference type="InterPro" id="IPR048641">
    <property type="entry name" value="RlmN_N"/>
</dbReference>
<dbReference type="InterPro" id="IPR027492">
    <property type="entry name" value="RNA_MTrfase_RlmN"/>
</dbReference>
<dbReference type="InterPro" id="IPR004383">
    <property type="entry name" value="rRNA_lsu_MTrfase_RlmN/Cfr"/>
</dbReference>
<dbReference type="InterPro" id="IPR007197">
    <property type="entry name" value="rSAM"/>
</dbReference>
<dbReference type="NCBIfam" id="TIGR00048">
    <property type="entry name" value="rRNA_mod_RlmN"/>
    <property type="match status" value="1"/>
</dbReference>
<dbReference type="PANTHER" id="PTHR30544">
    <property type="entry name" value="23S RRNA METHYLTRANSFERASE"/>
    <property type="match status" value="1"/>
</dbReference>
<dbReference type="PANTHER" id="PTHR30544:SF5">
    <property type="entry name" value="RADICAL SAM CORE DOMAIN-CONTAINING PROTEIN"/>
    <property type="match status" value="1"/>
</dbReference>
<dbReference type="Pfam" id="PF04055">
    <property type="entry name" value="Radical_SAM"/>
    <property type="match status" value="1"/>
</dbReference>
<dbReference type="Pfam" id="PF21016">
    <property type="entry name" value="RlmN_N"/>
    <property type="match status" value="1"/>
</dbReference>
<dbReference type="PIRSF" id="PIRSF006004">
    <property type="entry name" value="CHP00048"/>
    <property type="match status" value="1"/>
</dbReference>
<dbReference type="SFLD" id="SFLDF00275">
    <property type="entry name" value="adenosine_C2_methyltransferase"/>
    <property type="match status" value="1"/>
</dbReference>
<dbReference type="SFLD" id="SFLDG01062">
    <property type="entry name" value="methyltransferase_(Class_A)"/>
    <property type="match status" value="1"/>
</dbReference>
<dbReference type="SUPFAM" id="SSF102114">
    <property type="entry name" value="Radical SAM enzymes"/>
    <property type="match status" value="1"/>
</dbReference>
<dbReference type="PROSITE" id="PS51918">
    <property type="entry name" value="RADICAL_SAM"/>
    <property type="match status" value="1"/>
</dbReference>
<reference key="1">
    <citation type="submission" date="2005-11" db="EMBL/GenBank/DDBJ databases">
        <title>The complete genome sequence of Lawsonia intracellularis: the causative agent of proliferative enteropathy.</title>
        <authorList>
            <person name="Kaur K."/>
            <person name="Zhang Q."/>
            <person name="Beckler D."/>
            <person name="Munir S."/>
            <person name="Li L."/>
            <person name="Kinsley K."/>
            <person name="Herron L."/>
            <person name="Peterson A."/>
            <person name="May B."/>
            <person name="Singh S."/>
            <person name="Gebhart C."/>
            <person name="Kapur V."/>
        </authorList>
    </citation>
    <scope>NUCLEOTIDE SEQUENCE [LARGE SCALE GENOMIC DNA]</scope>
    <source>
        <strain>PHE/MN1-00</strain>
    </source>
</reference>